<proteinExistence type="inferred from homology"/>
<dbReference type="EMBL" id="CP000783">
    <property type="protein sequence ID" value="ABU77367.1"/>
    <property type="molecule type" value="Genomic_DNA"/>
</dbReference>
<dbReference type="RefSeq" id="WP_000124849.1">
    <property type="nucleotide sequence ID" value="NC_009778.1"/>
</dbReference>
<dbReference type="SMR" id="A7MNZ1"/>
<dbReference type="GeneID" id="92828699"/>
<dbReference type="KEGG" id="esa:ESA_02118"/>
<dbReference type="HOGENOM" id="CLU_123265_0_1_6"/>
<dbReference type="Proteomes" id="UP000000260">
    <property type="component" value="Chromosome"/>
</dbReference>
<dbReference type="GO" id="GO:1990904">
    <property type="term" value="C:ribonucleoprotein complex"/>
    <property type="evidence" value="ECO:0007669"/>
    <property type="project" value="UniProtKB-KW"/>
</dbReference>
<dbReference type="GO" id="GO:0005840">
    <property type="term" value="C:ribosome"/>
    <property type="evidence" value="ECO:0007669"/>
    <property type="project" value="UniProtKB-KW"/>
</dbReference>
<dbReference type="GO" id="GO:0019843">
    <property type="term" value="F:rRNA binding"/>
    <property type="evidence" value="ECO:0007669"/>
    <property type="project" value="UniProtKB-UniRule"/>
</dbReference>
<dbReference type="GO" id="GO:0003735">
    <property type="term" value="F:structural constituent of ribosome"/>
    <property type="evidence" value="ECO:0007669"/>
    <property type="project" value="InterPro"/>
</dbReference>
<dbReference type="GO" id="GO:0000027">
    <property type="term" value="P:ribosomal large subunit assembly"/>
    <property type="evidence" value="ECO:0007669"/>
    <property type="project" value="UniProtKB-UniRule"/>
</dbReference>
<dbReference type="GO" id="GO:0006412">
    <property type="term" value="P:translation"/>
    <property type="evidence" value="ECO:0007669"/>
    <property type="project" value="InterPro"/>
</dbReference>
<dbReference type="CDD" id="cd07026">
    <property type="entry name" value="Ribosomal_L20"/>
    <property type="match status" value="1"/>
</dbReference>
<dbReference type="FunFam" id="1.10.1900.20:FF:000001">
    <property type="entry name" value="50S ribosomal protein L20"/>
    <property type="match status" value="1"/>
</dbReference>
<dbReference type="Gene3D" id="6.10.160.10">
    <property type="match status" value="1"/>
</dbReference>
<dbReference type="Gene3D" id="1.10.1900.20">
    <property type="entry name" value="Ribosomal protein L20"/>
    <property type="match status" value="1"/>
</dbReference>
<dbReference type="HAMAP" id="MF_00382">
    <property type="entry name" value="Ribosomal_bL20"/>
    <property type="match status" value="1"/>
</dbReference>
<dbReference type="InterPro" id="IPR005813">
    <property type="entry name" value="Ribosomal_bL20"/>
</dbReference>
<dbReference type="InterPro" id="IPR049946">
    <property type="entry name" value="RIBOSOMAL_L20_CS"/>
</dbReference>
<dbReference type="InterPro" id="IPR035566">
    <property type="entry name" value="Ribosomal_protein_bL20_C"/>
</dbReference>
<dbReference type="NCBIfam" id="TIGR01032">
    <property type="entry name" value="rplT_bact"/>
    <property type="match status" value="1"/>
</dbReference>
<dbReference type="PANTHER" id="PTHR10986">
    <property type="entry name" value="39S RIBOSOMAL PROTEIN L20"/>
    <property type="match status" value="1"/>
</dbReference>
<dbReference type="Pfam" id="PF00453">
    <property type="entry name" value="Ribosomal_L20"/>
    <property type="match status" value="1"/>
</dbReference>
<dbReference type="PRINTS" id="PR00062">
    <property type="entry name" value="RIBOSOMALL20"/>
</dbReference>
<dbReference type="SUPFAM" id="SSF74731">
    <property type="entry name" value="Ribosomal protein L20"/>
    <property type="match status" value="1"/>
</dbReference>
<dbReference type="PROSITE" id="PS00937">
    <property type="entry name" value="RIBOSOMAL_L20"/>
    <property type="match status" value="1"/>
</dbReference>
<evidence type="ECO:0000255" key="1">
    <source>
        <dbReference type="HAMAP-Rule" id="MF_00382"/>
    </source>
</evidence>
<evidence type="ECO:0000305" key="2"/>
<name>RL20_CROS8</name>
<accession>A7MNZ1</accession>
<sequence>MARVKRGVIARARHKKILKQAKGYYGARSRVYRVAFQAVIKAGQYAYRDRRQRKRQFRQLWIARINAAARQNGISYSKFINGLKKASVEIDRKILADIAVFDKVAFSALVEKAKAALA</sequence>
<keyword id="KW-1185">Reference proteome</keyword>
<keyword id="KW-0687">Ribonucleoprotein</keyword>
<keyword id="KW-0689">Ribosomal protein</keyword>
<keyword id="KW-0694">RNA-binding</keyword>
<keyword id="KW-0699">rRNA-binding</keyword>
<comment type="function">
    <text evidence="1">Binds directly to 23S ribosomal RNA and is necessary for the in vitro assembly process of the 50S ribosomal subunit. It is not involved in the protein synthesizing functions of that subunit.</text>
</comment>
<comment type="similarity">
    <text evidence="1">Belongs to the bacterial ribosomal protein bL20 family.</text>
</comment>
<reference key="1">
    <citation type="journal article" date="2010" name="PLoS ONE">
        <title>Genome sequence of Cronobacter sakazakii BAA-894 and comparative genomic hybridization analysis with other Cronobacter species.</title>
        <authorList>
            <person name="Kucerova E."/>
            <person name="Clifton S.W."/>
            <person name="Xia X.Q."/>
            <person name="Long F."/>
            <person name="Porwollik S."/>
            <person name="Fulton L."/>
            <person name="Fronick C."/>
            <person name="Minx P."/>
            <person name="Kyung K."/>
            <person name="Warren W."/>
            <person name="Fulton R."/>
            <person name="Feng D."/>
            <person name="Wollam A."/>
            <person name="Shah N."/>
            <person name="Bhonagiri V."/>
            <person name="Nash W.E."/>
            <person name="Hallsworth-Pepin K."/>
            <person name="Wilson R.K."/>
            <person name="McClelland M."/>
            <person name="Forsythe S.J."/>
        </authorList>
    </citation>
    <scope>NUCLEOTIDE SEQUENCE [LARGE SCALE GENOMIC DNA]</scope>
    <source>
        <strain>ATCC BAA-894</strain>
    </source>
</reference>
<protein>
    <recommendedName>
        <fullName evidence="1">Large ribosomal subunit protein bL20</fullName>
    </recommendedName>
    <alternativeName>
        <fullName evidence="2">50S ribosomal protein L20</fullName>
    </alternativeName>
</protein>
<organism>
    <name type="scientific">Cronobacter sakazakii (strain ATCC BAA-894)</name>
    <name type="common">Enterobacter sakazakii</name>
    <dbReference type="NCBI Taxonomy" id="290339"/>
    <lineage>
        <taxon>Bacteria</taxon>
        <taxon>Pseudomonadati</taxon>
        <taxon>Pseudomonadota</taxon>
        <taxon>Gammaproteobacteria</taxon>
        <taxon>Enterobacterales</taxon>
        <taxon>Enterobacteriaceae</taxon>
        <taxon>Cronobacter</taxon>
    </lineage>
</organism>
<feature type="chain" id="PRO_1000048974" description="Large ribosomal subunit protein bL20">
    <location>
        <begin position="1"/>
        <end position="118"/>
    </location>
</feature>
<gene>
    <name evidence="1" type="primary">rplT</name>
    <name type="ordered locus">ESA_02118</name>
</gene>